<comment type="function">
    <text evidence="1">Transfers the gamma-phosphate of ATP to the 4'-position of a tetraacyldisaccharide 1-phosphate intermediate (termed DS-1-P) to form tetraacyldisaccharide 1,4'-bis-phosphate (lipid IVA).</text>
</comment>
<comment type="catalytic activity">
    <reaction evidence="1">
        <text>a lipid A disaccharide + ATP = a lipid IVA + ADP + H(+)</text>
        <dbReference type="Rhea" id="RHEA:67840"/>
        <dbReference type="ChEBI" id="CHEBI:15378"/>
        <dbReference type="ChEBI" id="CHEBI:30616"/>
        <dbReference type="ChEBI" id="CHEBI:176343"/>
        <dbReference type="ChEBI" id="CHEBI:176425"/>
        <dbReference type="ChEBI" id="CHEBI:456216"/>
        <dbReference type="EC" id="2.7.1.130"/>
    </reaction>
</comment>
<comment type="pathway">
    <text evidence="1">Glycolipid biosynthesis; lipid IV(A) biosynthesis; lipid IV(A) from (3R)-3-hydroxytetradecanoyl-[acyl-carrier-protein] and UDP-N-acetyl-alpha-D-glucosamine: step 6/6.</text>
</comment>
<comment type="similarity">
    <text evidence="1">Belongs to the LpxK family.</text>
</comment>
<protein>
    <recommendedName>
        <fullName evidence="1">Tetraacyldisaccharide 4'-kinase</fullName>
        <ecNumber evidence="1">2.7.1.130</ecNumber>
    </recommendedName>
    <alternativeName>
        <fullName evidence="1">Lipid A 4'-kinase</fullName>
    </alternativeName>
</protein>
<accession>A5ECK7</accession>
<feature type="chain" id="PRO_1000080459" description="Tetraacyldisaccharide 4'-kinase">
    <location>
        <begin position="1"/>
        <end position="345"/>
    </location>
</feature>
<feature type="binding site" evidence="1">
    <location>
        <begin position="51"/>
        <end position="58"/>
    </location>
    <ligand>
        <name>ATP</name>
        <dbReference type="ChEBI" id="CHEBI:30616"/>
    </ligand>
</feature>
<gene>
    <name evidence="1" type="primary">lpxK</name>
    <name type="ordered locus">BBta_1692</name>
</gene>
<sequence length="345" mass="36030">MREPAFWHRPHAWQSLLLSPLSVLYGAIAAHRMAQSGLDAGVPVICVGNFHVGGAGKTPTVLALSALLRELGEHPVVLSRGYGGRLAGPVAVDPAIHAAADVGDEPLMMAAHVPVVVSRHRAEGVGLAKTQGASVILMDDGFQNPSLTKDLALIVIDGARGLGNGRVFPAGPLRAPLPPQLARTDALIVVGSGAAGEAVAARVTAAGKPVFRAHLQPDPEVVAALAGRPLLAFAGIGDPQRFFRTLRASGLDVVGERAFPDHHPFSTDEIAALADKARHQGATLVTTQKDLARLRGHRILGRSDPVITAFPVTLQFSDPTALRSLVAHRLASARQRQPFALSAPG</sequence>
<evidence type="ECO:0000255" key="1">
    <source>
        <dbReference type="HAMAP-Rule" id="MF_00409"/>
    </source>
</evidence>
<dbReference type="EC" id="2.7.1.130" evidence="1"/>
<dbReference type="EMBL" id="CP000494">
    <property type="protein sequence ID" value="ABQ33901.1"/>
    <property type="molecule type" value="Genomic_DNA"/>
</dbReference>
<dbReference type="RefSeq" id="WP_012041932.1">
    <property type="nucleotide sequence ID" value="NC_009485.1"/>
</dbReference>
<dbReference type="SMR" id="A5ECK7"/>
<dbReference type="STRING" id="288000.BBta_1692"/>
<dbReference type="KEGG" id="bbt:BBta_1692"/>
<dbReference type="eggNOG" id="COG1663">
    <property type="taxonomic scope" value="Bacteria"/>
</dbReference>
<dbReference type="HOGENOM" id="CLU_038816_0_0_5"/>
<dbReference type="OrthoDB" id="9766423at2"/>
<dbReference type="UniPathway" id="UPA00359">
    <property type="reaction ID" value="UER00482"/>
</dbReference>
<dbReference type="Proteomes" id="UP000000246">
    <property type="component" value="Chromosome"/>
</dbReference>
<dbReference type="GO" id="GO:0005886">
    <property type="term" value="C:plasma membrane"/>
    <property type="evidence" value="ECO:0007669"/>
    <property type="project" value="TreeGrafter"/>
</dbReference>
<dbReference type="GO" id="GO:0005524">
    <property type="term" value="F:ATP binding"/>
    <property type="evidence" value="ECO:0007669"/>
    <property type="project" value="UniProtKB-UniRule"/>
</dbReference>
<dbReference type="GO" id="GO:0009029">
    <property type="term" value="F:tetraacyldisaccharide 4'-kinase activity"/>
    <property type="evidence" value="ECO:0007669"/>
    <property type="project" value="UniProtKB-UniRule"/>
</dbReference>
<dbReference type="GO" id="GO:0009245">
    <property type="term" value="P:lipid A biosynthetic process"/>
    <property type="evidence" value="ECO:0007669"/>
    <property type="project" value="UniProtKB-UniRule"/>
</dbReference>
<dbReference type="GO" id="GO:0009244">
    <property type="term" value="P:lipopolysaccharide core region biosynthetic process"/>
    <property type="evidence" value="ECO:0007669"/>
    <property type="project" value="TreeGrafter"/>
</dbReference>
<dbReference type="HAMAP" id="MF_00409">
    <property type="entry name" value="LpxK"/>
    <property type="match status" value="1"/>
</dbReference>
<dbReference type="InterPro" id="IPR003758">
    <property type="entry name" value="LpxK"/>
</dbReference>
<dbReference type="InterPro" id="IPR027417">
    <property type="entry name" value="P-loop_NTPase"/>
</dbReference>
<dbReference type="NCBIfam" id="TIGR00682">
    <property type="entry name" value="lpxK"/>
    <property type="match status" value="1"/>
</dbReference>
<dbReference type="PANTHER" id="PTHR42724">
    <property type="entry name" value="TETRAACYLDISACCHARIDE 4'-KINASE"/>
    <property type="match status" value="1"/>
</dbReference>
<dbReference type="PANTHER" id="PTHR42724:SF1">
    <property type="entry name" value="TETRAACYLDISACCHARIDE 4'-KINASE, MITOCHONDRIAL-RELATED"/>
    <property type="match status" value="1"/>
</dbReference>
<dbReference type="Pfam" id="PF02606">
    <property type="entry name" value="LpxK"/>
    <property type="match status" value="1"/>
</dbReference>
<dbReference type="SUPFAM" id="SSF52540">
    <property type="entry name" value="P-loop containing nucleoside triphosphate hydrolases"/>
    <property type="match status" value="1"/>
</dbReference>
<organism>
    <name type="scientific">Bradyrhizobium sp. (strain BTAi1 / ATCC BAA-1182)</name>
    <dbReference type="NCBI Taxonomy" id="288000"/>
    <lineage>
        <taxon>Bacteria</taxon>
        <taxon>Pseudomonadati</taxon>
        <taxon>Pseudomonadota</taxon>
        <taxon>Alphaproteobacteria</taxon>
        <taxon>Hyphomicrobiales</taxon>
        <taxon>Nitrobacteraceae</taxon>
        <taxon>Bradyrhizobium</taxon>
    </lineage>
</organism>
<keyword id="KW-0067">ATP-binding</keyword>
<keyword id="KW-0418">Kinase</keyword>
<keyword id="KW-0441">Lipid A biosynthesis</keyword>
<keyword id="KW-0444">Lipid biosynthesis</keyword>
<keyword id="KW-0443">Lipid metabolism</keyword>
<keyword id="KW-0547">Nucleotide-binding</keyword>
<keyword id="KW-1185">Reference proteome</keyword>
<keyword id="KW-0808">Transferase</keyword>
<proteinExistence type="inferred from homology"/>
<name>LPXK_BRASB</name>
<reference key="1">
    <citation type="journal article" date="2007" name="Science">
        <title>Legumes symbioses: absence of nod genes in photosynthetic bradyrhizobia.</title>
        <authorList>
            <person name="Giraud E."/>
            <person name="Moulin L."/>
            <person name="Vallenet D."/>
            <person name="Barbe V."/>
            <person name="Cytryn E."/>
            <person name="Avarre J.-C."/>
            <person name="Jaubert M."/>
            <person name="Simon D."/>
            <person name="Cartieaux F."/>
            <person name="Prin Y."/>
            <person name="Bena G."/>
            <person name="Hannibal L."/>
            <person name="Fardoux J."/>
            <person name="Kojadinovic M."/>
            <person name="Vuillet L."/>
            <person name="Lajus A."/>
            <person name="Cruveiller S."/>
            <person name="Rouy Z."/>
            <person name="Mangenot S."/>
            <person name="Segurens B."/>
            <person name="Dossat C."/>
            <person name="Franck W.L."/>
            <person name="Chang W.-S."/>
            <person name="Saunders E."/>
            <person name="Bruce D."/>
            <person name="Richardson P."/>
            <person name="Normand P."/>
            <person name="Dreyfus B."/>
            <person name="Pignol D."/>
            <person name="Stacey G."/>
            <person name="Emerich D."/>
            <person name="Vermeglio A."/>
            <person name="Medigue C."/>
            <person name="Sadowsky M."/>
        </authorList>
    </citation>
    <scope>NUCLEOTIDE SEQUENCE [LARGE SCALE GENOMIC DNA]</scope>
    <source>
        <strain>BTAi1 / ATCC BAA-1182</strain>
    </source>
</reference>